<sequence>MVKNLIFWLVITVVLMSVFQNFNSSDTSNHRVDYSTFLSEVNQDQVREAYINGRIISVTKKDSSKYITYIPINDPKLLDNLLTKNVKIVGEIPEEPSLLISIFISWFPMLLLIGVWIFFMRQMQMGGGKGAMSFGKSKARMLSEDQIQTTFADVAGCDEAKEEVSELVEYLKEPSRFQKLGGKIPKGILMVGPPGTGKTLLAKAIAGEAKVPFFTISGSDFVEMFVGVGASRVRDMFEHARKSAPCIIFIDEIDAVGRQRGAGLGGGHDEREQTLNQMLVEMDGFDGNEGVILIAATNRPDVLDPALLRPGRFDRQVIVALPDVRGRKQILKVHMRKVPLSEDVDPMIIARGTPGFSGADLANLVNEAALFAARFNNRVVSMIHFEKAKDKIMMGSERRSMVMSDFQKESTAYHEAGHVIIGRLVPDHDPAHKVTIIPRGQALGITFFLPESDILSISRQKLESQISTLYGGRLAEEIIYGSQNVSTGAFNDIKVATNLARNMVTQWGFSDKLGPLLYAEEEGEVFLGRSVAKAKHMSDETARIIDEEVKLLIEVNYNRARKILNENLDILHAMKDALIKYETIDSLQIDDLMERREVRKPKGWLEVDQKKDI</sequence>
<proteinExistence type="inferred from homology"/>
<protein>
    <recommendedName>
        <fullName evidence="1">ATP-dependent zinc metalloprotease FtsH</fullName>
        <ecNumber evidence="1">3.4.24.-</ecNumber>
    </recommendedName>
</protein>
<comment type="function">
    <text evidence="1">Acts as a processive, ATP-dependent zinc metallopeptidase for both cytoplasmic and membrane proteins. Plays a role in the quality control of integral membrane proteins.</text>
</comment>
<comment type="cofactor">
    <cofactor evidence="1">
        <name>Zn(2+)</name>
        <dbReference type="ChEBI" id="CHEBI:29105"/>
    </cofactor>
    <text evidence="1">Binds 1 zinc ion per subunit.</text>
</comment>
<comment type="subunit">
    <text evidence="1">Homohexamer.</text>
</comment>
<comment type="subcellular location">
    <subcellularLocation>
        <location evidence="1">Cell membrane</location>
        <topology evidence="1">Multi-pass membrane protein</topology>
        <orientation evidence="1">Cytoplasmic side</orientation>
    </subcellularLocation>
</comment>
<comment type="similarity">
    <text evidence="1">In the central section; belongs to the AAA ATPase family.</text>
</comment>
<comment type="similarity">
    <text evidence="1">In the C-terminal section; belongs to the peptidase M41 family.</text>
</comment>
<name>FTSH_BUCAP</name>
<reference key="1">
    <citation type="journal article" date="2002" name="Science">
        <title>50 million years of genomic stasis in endosymbiotic bacteria.</title>
        <authorList>
            <person name="Tamas I."/>
            <person name="Klasson L."/>
            <person name="Canbaeck B."/>
            <person name="Naeslund A.K."/>
            <person name="Eriksson A.-S."/>
            <person name="Wernegreen J.J."/>
            <person name="Sandstroem J.P."/>
            <person name="Moran N.A."/>
            <person name="Andersson S.G.E."/>
        </authorList>
    </citation>
    <scope>NUCLEOTIDE SEQUENCE [LARGE SCALE GENOMIC DNA]</scope>
    <source>
        <strain>Sg</strain>
    </source>
</reference>
<organism>
    <name type="scientific">Buchnera aphidicola subsp. Schizaphis graminum (strain Sg)</name>
    <dbReference type="NCBI Taxonomy" id="198804"/>
    <lineage>
        <taxon>Bacteria</taxon>
        <taxon>Pseudomonadati</taxon>
        <taxon>Pseudomonadota</taxon>
        <taxon>Gammaproteobacteria</taxon>
        <taxon>Enterobacterales</taxon>
        <taxon>Erwiniaceae</taxon>
        <taxon>Buchnera</taxon>
    </lineage>
</organism>
<keyword id="KW-0067">ATP-binding</keyword>
<keyword id="KW-1003">Cell membrane</keyword>
<keyword id="KW-0378">Hydrolase</keyword>
<keyword id="KW-0472">Membrane</keyword>
<keyword id="KW-0479">Metal-binding</keyword>
<keyword id="KW-0482">Metalloprotease</keyword>
<keyword id="KW-0547">Nucleotide-binding</keyword>
<keyword id="KW-0645">Protease</keyword>
<keyword id="KW-0812">Transmembrane</keyword>
<keyword id="KW-1133">Transmembrane helix</keyword>
<keyword id="KW-0862">Zinc</keyword>
<evidence type="ECO:0000255" key="1">
    <source>
        <dbReference type="HAMAP-Rule" id="MF_01458"/>
    </source>
</evidence>
<feature type="chain" id="PRO_0000084629" description="ATP-dependent zinc metalloprotease FtsH">
    <location>
        <begin position="1"/>
        <end position="613"/>
    </location>
</feature>
<feature type="topological domain" description="Cytoplasmic" evidence="1">
    <location>
        <begin position="1"/>
        <end position="4"/>
    </location>
</feature>
<feature type="transmembrane region" description="Helical" evidence="1">
    <location>
        <begin position="5"/>
        <end position="25"/>
    </location>
</feature>
<feature type="topological domain" description="Extracellular" evidence="1">
    <location>
        <begin position="26"/>
        <end position="98"/>
    </location>
</feature>
<feature type="transmembrane region" description="Helical" evidence="1">
    <location>
        <begin position="99"/>
        <end position="119"/>
    </location>
</feature>
<feature type="topological domain" description="Cytoplasmic" evidence="1">
    <location>
        <begin position="120"/>
        <end position="613"/>
    </location>
</feature>
<feature type="active site" evidence="1">
    <location>
        <position position="415"/>
    </location>
</feature>
<feature type="binding site" evidence="1">
    <location>
        <begin position="192"/>
        <end position="199"/>
    </location>
    <ligand>
        <name>ATP</name>
        <dbReference type="ChEBI" id="CHEBI:30616"/>
    </ligand>
</feature>
<feature type="binding site" evidence="1">
    <location>
        <position position="414"/>
    </location>
    <ligand>
        <name>Zn(2+)</name>
        <dbReference type="ChEBI" id="CHEBI:29105"/>
        <note>catalytic</note>
    </ligand>
</feature>
<feature type="binding site" evidence="1">
    <location>
        <position position="418"/>
    </location>
    <ligand>
        <name>Zn(2+)</name>
        <dbReference type="ChEBI" id="CHEBI:29105"/>
        <note>catalytic</note>
    </ligand>
</feature>
<feature type="binding site" evidence="1">
    <location>
        <position position="492"/>
    </location>
    <ligand>
        <name>Zn(2+)</name>
        <dbReference type="ChEBI" id="CHEBI:29105"/>
        <note>catalytic</note>
    </ligand>
</feature>
<gene>
    <name evidence="1" type="primary">ftsH</name>
    <name type="synonym">hflB</name>
    <name type="ordered locus">BUsg_369</name>
</gene>
<accession>Q8K9G8</accession>
<dbReference type="EC" id="3.4.24.-" evidence="1"/>
<dbReference type="EMBL" id="AE013218">
    <property type="protein sequence ID" value="AAM67921.1"/>
    <property type="molecule type" value="Genomic_DNA"/>
</dbReference>
<dbReference type="RefSeq" id="WP_011053888.1">
    <property type="nucleotide sequence ID" value="NC_004061.1"/>
</dbReference>
<dbReference type="SMR" id="Q8K9G8"/>
<dbReference type="STRING" id="198804.BUsg_369"/>
<dbReference type="MEROPS" id="M41.001"/>
<dbReference type="GeneID" id="93003839"/>
<dbReference type="KEGG" id="bas:BUsg_369"/>
<dbReference type="eggNOG" id="COG0465">
    <property type="taxonomic scope" value="Bacteria"/>
</dbReference>
<dbReference type="HOGENOM" id="CLU_000688_16_2_6"/>
<dbReference type="Proteomes" id="UP000000416">
    <property type="component" value="Chromosome"/>
</dbReference>
<dbReference type="GO" id="GO:0005886">
    <property type="term" value="C:plasma membrane"/>
    <property type="evidence" value="ECO:0007669"/>
    <property type="project" value="UniProtKB-SubCell"/>
</dbReference>
<dbReference type="GO" id="GO:0005524">
    <property type="term" value="F:ATP binding"/>
    <property type="evidence" value="ECO:0007669"/>
    <property type="project" value="UniProtKB-UniRule"/>
</dbReference>
<dbReference type="GO" id="GO:0016887">
    <property type="term" value="F:ATP hydrolysis activity"/>
    <property type="evidence" value="ECO:0007669"/>
    <property type="project" value="UniProtKB-UniRule"/>
</dbReference>
<dbReference type="GO" id="GO:0004176">
    <property type="term" value="F:ATP-dependent peptidase activity"/>
    <property type="evidence" value="ECO:0007669"/>
    <property type="project" value="InterPro"/>
</dbReference>
<dbReference type="GO" id="GO:0004222">
    <property type="term" value="F:metalloendopeptidase activity"/>
    <property type="evidence" value="ECO:0007669"/>
    <property type="project" value="InterPro"/>
</dbReference>
<dbReference type="GO" id="GO:0008270">
    <property type="term" value="F:zinc ion binding"/>
    <property type="evidence" value="ECO:0007669"/>
    <property type="project" value="UniProtKB-UniRule"/>
</dbReference>
<dbReference type="GO" id="GO:0030163">
    <property type="term" value="P:protein catabolic process"/>
    <property type="evidence" value="ECO:0007669"/>
    <property type="project" value="UniProtKB-UniRule"/>
</dbReference>
<dbReference type="GO" id="GO:0006508">
    <property type="term" value="P:proteolysis"/>
    <property type="evidence" value="ECO:0007669"/>
    <property type="project" value="UniProtKB-KW"/>
</dbReference>
<dbReference type="CDD" id="cd19501">
    <property type="entry name" value="RecA-like_FtsH"/>
    <property type="match status" value="1"/>
</dbReference>
<dbReference type="FunFam" id="1.10.8.60:FF:000001">
    <property type="entry name" value="ATP-dependent zinc metalloprotease FtsH"/>
    <property type="match status" value="1"/>
</dbReference>
<dbReference type="FunFam" id="1.20.58.760:FF:000001">
    <property type="entry name" value="ATP-dependent zinc metalloprotease FtsH"/>
    <property type="match status" value="1"/>
</dbReference>
<dbReference type="FunFam" id="3.30.720.210:FF:000001">
    <property type="entry name" value="ATP-dependent zinc metalloprotease FtsH"/>
    <property type="match status" value="1"/>
</dbReference>
<dbReference type="FunFam" id="3.40.50.300:FF:000001">
    <property type="entry name" value="ATP-dependent zinc metalloprotease FtsH"/>
    <property type="match status" value="1"/>
</dbReference>
<dbReference type="Gene3D" id="1.10.8.60">
    <property type="match status" value="1"/>
</dbReference>
<dbReference type="Gene3D" id="3.30.720.210">
    <property type="match status" value="1"/>
</dbReference>
<dbReference type="Gene3D" id="3.40.50.300">
    <property type="entry name" value="P-loop containing nucleotide triphosphate hydrolases"/>
    <property type="match status" value="1"/>
</dbReference>
<dbReference type="Gene3D" id="1.20.58.760">
    <property type="entry name" value="Peptidase M41"/>
    <property type="match status" value="1"/>
</dbReference>
<dbReference type="HAMAP" id="MF_01458">
    <property type="entry name" value="FtsH"/>
    <property type="match status" value="1"/>
</dbReference>
<dbReference type="InterPro" id="IPR003593">
    <property type="entry name" value="AAA+_ATPase"/>
</dbReference>
<dbReference type="InterPro" id="IPR041569">
    <property type="entry name" value="AAA_lid_3"/>
</dbReference>
<dbReference type="InterPro" id="IPR003959">
    <property type="entry name" value="ATPase_AAA_core"/>
</dbReference>
<dbReference type="InterPro" id="IPR003960">
    <property type="entry name" value="ATPase_AAA_CS"/>
</dbReference>
<dbReference type="InterPro" id="IPR005936">
    <property type="entry name" value="FtsH"/>
</dbReference>
<dbReference type="InterPro" id="IPR027417">
    <property type="entry name" value="P-loop_NTPase"/>
</dbReference>
<dbReference type="InterPro" id="IPR011546">
    <property type="entry name" value="Pept_M41_FtsH_extracell"/>
</dbReference>
<dbReference type="InterPro" id="IPR000642">
    <property type="entry name" value="Peptidase_M41"/>
</dbReference>
<dbReference type="InterPro" id="IPR037219">
    <property type="entry name" value="Peptidase_M41-like"/>
</dbReference>
<dbReference type="NCBIfam" id="TIGR01241">
    <property type="entry name" value="FtsH_fam"/>
    <property type="match status" value="1"/>
</dbReference>
<dbReference type="NCBIfam" id="NF008004">
    <property type="entry name" value="PRK10733.1"/>
    <property type="match status" value="1"/>
</dbReference>
<dbReference type="PANTHER" id="PTHR23076:SF97">
    <property type="entry name" value="ATP-DEPENDENT ZINC METALLOPROTEASE YME1L1"/>
    <property type="match status" value="1"/>
</dbReference>
<dbReference type="PANTHER" id="PTHR23076">
    <property type="entry name" value="METALLOPROTEASE M41 FTSH"/>
    <property type="match status" value="1"/>
</dbReference>
<dbReference type="Pfam" id="PF00004">
    <property type="entry name" value="AAA"/>
    <property type="match status" value="1"/>
</dbReference>
<dbReference type="Pfam" id="PF17862">
    <property type="entry name" value="AAA_lid_3"/>
    <property type="match status" value="1"/>
</dbReference>
<dbReference type="Pfam" id="PF06480">
    <property type="entry name" value="FtsH_ext"/>
    <property type="match status" value="1"/>
</dbReference>
<dbReference type="Pfam" id="PF01434">
    <property type="entry name" value="Peptidase_M41"/>
    <property type="match status" value="1"/>
</dbReference>
<dbReference type="SMART" id="SM00382">
    <property type="entry name" value="AAA"/>
    <property type="match status" value="1"/>
</dbReference>
<dbReference type="SUPFAM" id="SSF140990">
    <property type="entry name" value="FtsH protease domain-like"/>
    <property type="match status" value="1"/>
</dbReference>
<dbReference type="SUPFAM" id="SSF52540">
    <property type="entry name" value="P-loop containing nucleoside triphosphate hydrolases"/>
    <property type="match status" value="1"/>
</dbReference>
<dbReference type="PROSITE" id="PS00674">
    <property type="entry name" value="AAA"/>
    <property type="match status" value="1"/>
</dbReference>